<organism>
    <name type="scientific">Stutzerimonas stutzeri (strain A1501)</name>
    <name type="common">Pseudomonas stutzeri</name>
    <dbReference type="NCBI Taxonomy" id="379731"/>
    <lineage>
        <taxon>Bacteria</taxon>
        <taxon>Pseudomonadati</taxon>
        <taxon>Pseudomonadota</taxon>
        <taxon>Gammaproteobacteria</taxon>
        <taxon>Pseudomonadales</taxon>
        <taxon>Pseudomonadaceae</taxon>
        <taxon>Stutzerimonas</taxon>
    </lineage>
</organism>
<keyword id="KW-0030">Aminoacyl-tRNA synthetase</keyword>
<keyword id="KW-0067">ATP-binding</keyword>
<keyword id="KW-0963">Cytoplasm</keyword>
<keyword id="KW-0436">Ligase</keyword>
<keyword id="KW-0547">Nucleotide-binding</keyword>
<keyword id="KW-0648">Protein biosynthesis</keyword>
<keyword id="KW-1185">Reference proteome</keyword>
<proteinExistence type="inferred from homology"/>
<feature type="chain" id="PRO_1000069157" description="Proline--tRNA ligase">
    <location>
        <begin position="1"/>
        <end position="571"/>
    </location>
</feature>
<dbReference type="EC" id="6.1.1.15" evidence="1"/>
<dbReference type="EMBL" id="CP000304">
    <property type="protein sequence ID" value="ABP80465.1"/>
    <property type="molecule type" value="Genomic_DNA"/>
</dbReference>
<dbReference type="RefSeq" id="WP_011913922.1">
    <property type="nucleotide sequence ID" value="NC_009434.1"/>
</dbReference>
<dbReference type="SMR" id="A4VNB4"/>
<dbReference type="KEGG" id="psa:PST_2819"/>
<dbReference type="eggNOG" id="COG0442">
    <property type="taxonomic scope" value="Bacteria"/>
</dbReference>
<dbReference type="HOGENOM" id="CLU_016739_0_0_6"/>
<dbReference type="Proteomes" id="UP000000233">
    <property type="component" value="Chromosome"/>
</dbReference>
<dbReference type="GO" id="GO:0005829">
    <property type="term" value="C:cytosol"/>
    <property type="evidence" value="ECO:0007669"/>
    <property type="project" value="TreeGrafter"/>
</dbReference>
<dbReference type="GO" id="GO:0002161">
    <property type="term" value="F:aminoacyl-tRNA deacylase activity"/>
    <property type="evidence" value="ECO:0007669"/>
    <property type="project" value="InterPro"/>
</dbReference>
<dbReference type="GO" id="GO:0005524">
    <property type="term" value="F:ATP binding"/>
    <property type="evidence" value="ECO:0007669"/>
    <property type="project" value="UniProtKB-UniRule"/>
</dbReference>
<dbReference type="GO" id="GO:0004827">
    <property type="term" value="F:proline-tRNA ligase activity"/>
    <property type="evidence" value="ECO:0007669"/>
    <property type="project" value="UniProtKB-UniRule"/>
</dbReference>
<dbReference type="GO" id="GO:0006433">
    <property type="term" value="P:prolyl-tRNA aminoacylation"/>
    <property type="evidence" value="ECO:0007669"/>
    <property type="project" value="UniProtKB-UniRule"/>
</dbReference>
<dbReference type="CDD" id="cd04334">
    <property type="entry name" value="ProRS-INS"/>
    <property type="match status" value="1"/>
</dbReference>
<dbReference type="CDD" id="cd00861">
    <property type="entry name" value="ProRS_anticodon_short"/>
    <property type="match status" value="1"/>
</dbReference>
<dbReference type="CDD" id="cd00779">
    <property type="entry name" value="ProRS_core_prok"/>
    <property type="match status" value="1"/>
</dbReference>
<dbReference type="FunFam" id="3.30.930.10:FF:000043">
    <property type="entry name" value="Proline--tRNA ligase"/>
    <property type="match status" value="1"/>
</dbReference>
<dbReference type="FunFam" id="3.30.930.10:FF:000097">
    <property type="entry name" value="Proline--tRNA ligase"/>
    <property type="match status" value="1"/>
</dbReference>
<dbReference type="FunFam" id="3.40.50.800:FF:000006">
    <property type="entry name" value="Proline--tRNA ligase"/>
    <property type="match status" value="1"/>
</dbReference>
<dbReference type="FunFam" id="3.90.960.10:FF:000001">
    <property type="entry name" value="Proline--tRNA ligase"/>
    <property type="match status" value="1"/>
</dbReference>
<dbReference type="Gene3D" id="3.40.50.800">
    <property type="entry name" value="Anticodon-binding domain"/>
    <property type="match status" value="1"/>
</dbReference>
<dbReference type="Gene3D" id="3.30.930.10">
    <property type="entry name" value="Bira Bifunctional Protein, Domain 2"/>
    <property type="match status" value="2"/>
</dbReference>
<dbReference type="Gene3D" id="3.90.960.10">
    <property type="entry name" value="YbaK/aminoacyl-tRNA synthetase-associated domain"/>
    <property type="match status" value="1"/>
</dbReference>
<dbReference type="HAMAP" id="MF_01569">
    <property type="entry name" value="Pro_tRNA_synth_type1"/>
    <property type="match status" value="1"/>
</dbReference>
<dbReference type="InterPro" id="IPR002314">
    <property type="entry name" value="aa-tRNA-synt_IIb"/>
</dbReference>
<dbReference type="InterPro" id="IPR006195">
    <property type="entry name" value="aa-tRNA-synth_II"/>
</dbReference>
<dbReference type="InterPro" id="IPR045864">
    <property type="entry name" value="aa-tRNA-synth_II/BPL/LPL"/>
</dbReference>
<dbReference type="InterPro" id="IPR004154">
    <property type="entry name" value="Anticodon-bd"/>
</dbReference>
<dbReference type="InterPro" id="IPR036621">
    <property type="entry name" value="Anticodon-bd_dom_sf"/>
</dbReference>
<dbReference type="InterPro" id="IPR002316">
    <property type="entry name" value="Pro-tRNA-ligase_IIa"/>
</dbReference>
<dbReference type="InterPro" id="IPR004500">
    <property type="entry name" value="Pro-tRNA-synth_IIa_bac-type"/>
</dbReference>
<dbReference type="InterPro" id="IPR023717">
    <property type="entry name" value="Pro-tRNA-Synthase_IIa_type1"/>
</dbReference>
<dbReference type="InterPro" id="IPR050062">
    <property type="entry name" value="Pro-tRNA_synthetase"/>
</dbReference>
<dbReference type="InterPro" id="IPR044140">
    <property type="entry name" value="ProRS_anticodon_short"/>
</dbReference>
<dbReference type="InterPro" id="IPR033730">
    <property type="entry name" value="ProRS_core_prok"/>
</dbReference>
<dbReference type="InterPro" id="IPR036754">
    <property type="entry name" value="YbaK/aa-tRNA-synt-asso_dom_sf"/>
</dbReference>
<dbReference type="InterPro" id="IPR007214">
    <property type="entry name" value="YbaK/aa-tRNA-synth-assoc-dom"/>
</dbReference>
<dbReference type="NCBIfam" id="NF006625">
    <property type="entry name" value="PRK09194.1"/>
    <property type="match status" value="1"/>
</dbReference>
<dbReference type="NCBIfam" id="TIGR00409">
    <property type="entry name" value="proS_fam_II"/>
    <property type="match status" value="1"/>
</dbReference>
<dbReference type="PANTHER" id="PTHR42753">
    <property type="entry name" value="MITOCHONDRIAL RIBOSOME PROTEIN L39/PROLYL-TRNA LIGASE FAMILY MEMBER"/>
    <property type="match status" value="1"/>
</dbReference>
<dbReference type="PANTHER" id="PTHR42753:SF2">
    <property type="entry name" value="PROLINE--TRNA LIGASE"/>
    <property type="match status" value="1"/>
</dbReference>
<dbReference type="Pfam" id="PF03129">
    <property type="entry name" value="HGTP_anticodon"/>
    <property type="match status" value="1"/>
</dbReference>
<dbReference type="Pfam" id="PF00587">
    <property type="entry name" value="tRNA-synt_2b"/>
    <property type="match status" value="1"/>
</dbReference>
<dbReference type="Pfam" id="PF04073">
    <property type="entry name" value="tRNA_edit"/>
    <property type="match status" value="1"/>
</dbReference>
<dbReference type="PIRSF" id="PIRSF001535">
    <property type="entry name" value="ProRS_1"/>
    <property type="match status" value="1"/>
</dbReference>
<dbReference type="PRINTS" id="PR01046">
    <property type="entry name" value="TRNASYNTHPRO"/>
</dbReference>
<dbReference type="SUPFAM" id="SSF52954">
    <property type="entry name" value="Class II aaRS ABD-related"/>
    <property type="match status" value="1"/>
</dbReference>
<dbReference type="SUPFAM" id="SSF55681">
    <property type="entry name" value="Class II aaRS and biotin synthetases"/>
    <property type="match status" value="1"/>
</dbReference>
<dbReference type="SUPFAM" id="SSF55826">
    <property type="entry name" value="YbaK/ProRS associated domain"/>
    <property type="match status" value="1"/>
</dbReference>
<dbReference type="PROSITE" id="PS50862">
    <property type="entry name" value="AA_TRNA_LIGASE_II"/>
    <property type="match status" value="1"/>
</dbReference>
<sequence length="571" mass="63376">MRTSQFLLSTLKETPSDAVVISHQLMLRAGMIRKLASGLYTWMPMGLRALRKAEAIVREEMNKAGALEVLMPAIQPAELWQESGRWEQYGPELLRLKDRHDREFCVGPTHEEVITDLARNELNSYKQLPINFYQIQTKFRDEIRPRFGLMRGREFLMKDAYSFHLNQESLQETYDRMHQAYCNIFTRLGLNFRPVQADTGSIGGTGSHEFHVLAESGEDDIAFSDSSDYAANIEKAEAIPRETERAAPGEELRLIDTPDAKTIIELVEQFGVAVEKTVKTLVVHGVEKGQLVALIVRGDHELNEIKAANLAQVASPLVFASEAEIRAAIGAGPGSLGPLNLPIPCVIDRSVALMSDFSAGANIDDKHYLGLNWERDLPLPQVADLRNVVAGDPSPDGKGSLVIKRGIEVGHIFQLGTKYSEAMNCQVMGENGKPATLIMGCYGIGVSRVVAAAIEQNYDERGILWPDALAPFQIALVPMKYETEAVREATDKLYAELTAAGYEVLLDDRDKKTSPGVKFADMELIGIPHRIVVSDRGLADGMLEYKHRRDAQPQQVAVSDILSFINSRVHR</sequence>
<comment type="function">
    <text evidence="1">Catalyzes the attachment of proline to tRNA(Pro) in a two-step reaction: proline is first activated by ATP to form Pro-AMP and then transferred to the acceptor end of tRNA(Pro). As ProRS can inadvertently accommodate and process non-cognate amino acids such as alanine and cysteine, to avoid such errors it has two additional distinct editing activities against alanine. One activity is designated as 'pretransfer' editing and involves the tRNA(Pro)-independent hydrolysis of activated Ala-AMP. The other activity is designated 'posttransfer' editing and involves deacylation of mischarged Ala-tRNA(Pro). The misacylated Cys-tRNA(Pro) is not edited by ProRS.</text>
</comment>
<comment type="catalytic activity">
    <reaction evidence="1">
        <text>tRNA(Pro) + L-proline + ATP = L-prolyl-tRNA(Pro) + AMP + diphosphate</text>
        <dbReference type="Rhea" id="RHEA:14305"/>
        <dbReference type="Rhea" id="RHEA-COMP:9700"/>
        <dbReference type="Rhea" id="RHEA-COMP:9702"/>
        <dbReference type="ChEBI" id="CHEBI:30616"/>
        <dbReference type="ChEBI" id="CHEBI:33019"/>
        <dbReference type="ChEBI" id="CHEBI:60039"/>
        <dbReference type="ChEBI" id="CHEBI:78442"/>
        <dbReference type="ChEBI" id="CHEBI:78532"/>
        <dbReference type="ChEBI" id="CHEBI:456215"/>
        <dbReference type="EC" id="6.1.1.15"/>
    </reaction>
</comment>
<comment type="subunit">
    <text evidence="1">Homodimer.</text>
</comment>
<comment type="subcellular location">
    <subcellularLocation>
        <location evidence="1">Cytoplasm</location>
    </subcellularLocation>
</comment>
<comment type="domain">
    <text evidence="1">Consists of three domains: the N-terminal catalytic domain, the editing domain and the C-terminal anticodon-binding domain.</text>
</comment>
<comment type="similarity">
    <text evidence="1">Belongs to the class-II aminoacyl-tRNA synthetase family. ProS type 1 subfamily.</text>
</comment>
<evidence type="ECO:0000255" key="1">
    <source>
        <dbReference type="HAMAP-Rule" id="MF_01569"/>
    </source>
</evidence>
<gene>
    <name evidence="1" type="primary">proS</name>
    <name type="ordered locus">PST_2819</name>
</gene>
<protein>
    <recommendedName>
        <fullName evidence="1">Proline--tRNA ligase</fullName>
        <ecNumber evidence="1">6.1.1.15</ecNumber>
    </recommendedName>
    <alternativeName>
        <fullName evidence="1">Prolyl-tRNA synthetase</fullName>
        <shortName evidence="1">ProRS</shortName>
    </alternativeName>
</protein>
<name>SYP_STUS1</name>
<reference key="1">
    <citation type="journal article" date="2008" name="Proc. Natl. Acad. Sci. U.S.A.">
        <title>Nitrogen fixation island and rhizosphere competence traits in the genome of root-associated Pseudomonas stutzeri A1501.</title>
        <authorList>
            <person name="Yan Y."/>
            <person name="Yang J."/>
            <person name="Dou Y."/>
            <person name="Chen M."/>
            <person name="Ping S."/>
            <person name="Peng J."/>
            <person name="Lu W."/>
            <person name="Zhang W."/>
            <person name="Yao Z."/>
            <person name="Li H."/>
            <person name="Liu W."/>
            <person name="He S."/>
            <person name="Geng L."/>
            <person name="Zhang X."/>
            <person name="Yang F."/>
            <person name="Yu H."/>
            <person name="Zhan Y."/>
            <person name="Li D."/>
            <person name="Lin Z."/>
            <person name="Wang Y."/>
            <person name="Elmerich C."/>
            <person name="Lin M."/>
            <person name="Jin Q."/>
        </authorList>
    </citation>
    <scope>NUCLEOTIDE SEQUENCE [LARGE SCALE GENOMIC DNA]</scope>
    <source>
        <strain>A1501</strain>
    </source>
</reference>
<accession>A4VNB4</accession>